<sequence length="134" mass="14645">MIVGIGSDLIDIRRVEKTLERHGSRFRDRVFTEIEQRKSEGRKQRAASYAKRFAAKEACAKALGTGIAEGVFWRDMGVVNTPSGKPTMHLTGGAAKQLQKLLPAGTNAAIHLTITDDFPLAQAFVIIEALPVLE</sequence>
<name>ACPS_BRUME</name>
<evidence type="ECO:0000255" key="1">
    <source>
        <dbReference type="HAMAP-Rule" id="MF_00101"/>
    </source>
</evidence>
<evidence type="ECO:0000305" key="2"/>
<protein>
    <recommendedName>
        <fullName evidence="1">Holo-[acyl-carrier-protein] synthase</fullName>
        <shortName evidence="1">Holo-ACP synthase</shortName>
        <ecNumber evidence="1">2.7.8.7</ecNumber>
    </recommendedName>
    <alternativeName>
        <fullName evidence="1">4'-phosphopantetheinyl transferase AcpS</fullName>
    </alternativeName>
</protein>
<feature type="chain" id="PRO_0000175619" description="Holo-[acyl-carrier-protein] synthase">
    <location>
        <begin position="1"/>
        <end position="134"/>
    </location>
</feature>
<feature type="binding site" evidence="1">
    <location>
        <position position="8"/>
    </location>
    <ligand>
        <name>Mg(2+)</name>
        <dbReference type="ChEBI" id="CHEBI:18420"/>
    </ligand>
</feature>
<feature type="binding site" evidence="1">
    <location>
        <position position="57"/>
    </location>
    <ligand>
        <name>Mg(2+)</name>
        <dbReference type="ChEBI" id="CHEBI:18420"/>
    </ligand>
</feature>
<reference key="1">
    <citation type="journal article" date="2002" name="Proc. Natl. Acad. Sci. U.S.A.">
        <title>The genome sequence of the facultative intracellular pathogen Brucella melitensis.</title>
        <authorList>
            <person name="DelVecchio V.G."/>
            <person name="Kapatral V."/>
            <person name="Redkar R.J."/>
            <person name="Patra G."/>
            <person name="Mujer C."/>
            <person name="Los T."/>
            <person name="Ivanova N."/>
            <person name="Anderson I."/>
            <person name="Bhattacharyya A."/>
            <person name="Lykidis A."/>
            <person name="Reznik G."/>
            <person name="Jablonski L."/>
            <person name="Larsen N."/>
            <person name="D'Souza M."/>
            <person name="Bernal A."/>
            <person name="Mazur M."/>
            <person name="Goltsman E."/>
            <person name="Selkov E."/>
            <person name="Elzer P.H."/>
            <person name="Hagius S."/>
            <person name="O'Callaghan D."/>
            <person name="Letesson J.-J."/>
            <person name="Haselkorn R."/>
            <person name="Kyrpides N.C."/>
            <person name="Overbeek R."/>
        </authorList>
    </citation>
    <scope>NUCLEOTIDE SEQUENCE [LARGE SCALE GENOMIC DNA]</scope>
    <source>
        <strain>ATCC 23456 / CCUG 17765 / NCTC 10094 / 16M</strain>
    </source>
</reference>
<gene>
    <name evidence="1" type="primary">acpS</name>
    <name type="ordered locus">BMEI1289</name>
</gene>
<accession>P63464</accession>
<accession>Q8YG72</accession>
<dbReference type="EC" id="2.7.8.7" evidence="1"/>
<dbReference type="EMBL" id="AE008917">
    <property type="protein sequence ID" value="AAL52470.1"/>
    <property type="status" value="ALT_INIT"/>
    <property type="molecule type" value="Genomic_DNA"/>
</dbReference>
<dbReference type="PIR" id="AC3413">
    <property type="entry name" value="AC3413"/>
</dbReference>
<dbReference type="RefSeq" id="WP_002963803.1">
    <property type="nucleotide sequence ID" value="NZ_GG703778.1"/>
</dbReference>
<dbReference type="SMR" id="P63464"/>
<dbReference type="GeneID" id="97534013"/>
<dbReference type="KEGG" id="bme:BMEI1289"/>
<dbReference type="KEGG" id="bmel:DK63_116"/>
<dbReference type="PATRIC" id="fig|224914.52.peg.121"/>
<dbReference type="eggNOG" id="COG0736">
    <property type="taxonomic scope" value="Bacteria"/>
</dbReference>
<dbReference type="PhylomeDB" id="P63464"/>
<dbReference type="Proteomes" id="UP000000419">
    <property type="component" value="Chromosome I"/>
</dbReference>
<dbReference type="GO" id="GO:0005737">
    <property type="term" value="C:cytoplasm"/>
    <property type="evidence" value="ECO:0007669"/>
    <property type="project" value="UniProtKB-SubCell"/>
</dbReference>
<dbReference type="GO" id="GO:0008897">
    <property type="term" value="F:holo-[acyl-carrier-protein] synthase activity"/>
    <property type="evidence" value="ECO:0007669"/>
    <property type="project" value="UniProtKB-UniRule"/>
</dbReference>
<dbReference type="GO" id="GO:0000287">
    <property type="term" value="F:magnesium ion binding"/>
    <property type="evidence" value="ECO:0007669"/>
    <property type="project" value="UniProtKB-UniRule"/>
</dbReference>
<dbReference type="GO" id="GO:0006633">
    <property type="term" value="P:fatty acid biosynthetic process"/>
    <property type="evidence" value="ECO:0007669"/>
    <property type="project" value="UniProtKB-UniRule"/>
</dbReference>
<dbReference type="Gene3D" id="3.90.470.20">
    <property type="entry name" value="4'-phosphopantetheinyl transferase domain"/>
    <property type="match status" value="1"/>
</dbReference>
<dbReference type="HAMAP" id="MF_00101">
    <property type="entry name" value="AcpS"/>
    <property type="match status" value="1"/>
</dbReference>
<dbReference type="InterPro" id="IPR008278">
    <property type="entry name" value="4-PPantetheinyl_Trfase_dom"/>
</dbReference>
<dbReference type="InterPro" id="IPR037143">
    <property type="entry name" value="4-PPantetheinyl_Trfase_dom_sf"/>
</dbReference>
<dbReference type="InterPro" id="IPR002582">
    <property type="entry name" value="ACPS"/>
</dbReference>
<dbReference type="InterPro" id="IPR004568">
    <property type="entry name" value="Ppantetheine-prot_Trfase_dom"/>
</dbReference>
<dbReference type="NCBIfam" id="TIGR00516">
    <property type="entry name" value="acpS"/>
    <property type="match status" value="1"/>
</dbReference>
<dbReference type="NCBIfam" id="TIGR00556">
    <property type="entry name" value="pantethn_trn"/>
    <property type="match status" value="1"/>
</dbReference>
<dbReference type="Pfam" id="PF01648">
    <property type="entry name" value="ACPS"/>
    <property type="match status" value="1"/>
</dbReference>
<dbReference type="SUPFAM" id="SSF56214">
    <property type="entry name" value="4'-phosphopantetheinyl transferase"/>
    <property type="match status" value="1"/>
</dbReference>
<comment type="function">
    <text evidence="1">Transfers the 4'-phosphopantetheine moiety from coenzyme A to a Ser of acyl-carrier-protein.</text>
</comment>
<comment type="catalytic activity">
    <reaction evidence="1">
        <text>apo-[ACP] + CoA = holo-[ACP] + adenosine 3',5'-bisphosphate + H(+)</text>
        <dbReference type="Rhea" id="RHEA:12068"/>
        <dbReference type="Rhea" id="RHEA-COMP:9685"/>
        <dbReference type="Rhea" id="RHEA-COMP:9690"/>
        <dbReference type="ChEBI" id="CHEBI:15378"/>
        <dbReference type="ChEBI" id="CHEBI:29999"/>
        <dbReference type="ChEBI" id="CHEBI:57287"/>
        <dbReference type="ChEBI" id="CHEBI:58343"/>
        <dbReference type="ChEBI" id="CHEBI:64479"/>
        <dbReference type="EC" id="2.7.8.7"/>
    </reaction>
</comment>
<comment type="cofactor">
    <cofactor evidence="1">
        <name>Mg(2+)</name>
        <dbReference type="ChEBI" id="CHEBI:18420"/>
    </cofactor>
</comment>
<comment type="subcellular location">
    <subcellularLocation>
        <location evidence="1">Cytoplasm</location>
    </subcellularLocation>
</comment>
<comment type="similarity">
    <text evidence="1">Belongs to the P-Pant transferase superfamily. AcpS family.</text>
</comment>
<comment type="sequence caution" evidence="2">
    <conflict type="erroneous initiation">
        <sequence resource="EMBL-CDS" id="AAL52470"/>
    </conflict>
</comment>
<keyword id="KW-0963">Cytoplasm</keyword>
<keyword id="KW-0275">Fatty acid biosynthesis</keyword>
<keyword id="KW-0276">Fatty acid metabolism</keyword>
<keyword id="KW-0444">Lipid biosynthesis</keyword>
<keyword id="KW-0443">Lipid metabolism</keyword>
<keyword id="KW-0460">Magnesium</keyword>
<keyword id="KW-0479">Metal-binding</keyword>
<keyword id="KW-0808">Transferase</keyword>
<organism>
    <name type="scientific">Brucella melitensis biotype 1 (strain ATCC 23456 / CCUG 17765 / NCTC 10094 / 16M)</name>
    <dbReference type="NCBI Taxonomy" id="224914"/>
    <lineage>
        <taxon>Bacteria</taxon>
        <taxon>Pseudomonadati</taxon>
        <taxon>Pseudomonadota</taxon>
        <taxon>Alphaproteobacteria</taxon>
        <taxon>Hyphomicrobiales</taxon>
        <taxon>Brucellaceae</taxon>
        <taxon>Brucella/Ochrobactrum group</taxon>
        <taxon>Brucella</taxon>
    </lineage>
</organism>
<proteinExistence type="inferred from homology"/>